<feature type="chain" id="PRO_0000382534" description="UPF0397 protein LCABL_04350">
    <location>
        <begin position="1"/>
        <end position="186"/>
    </location>
</feature>
<feature type="transmembrane region" description="Helical" evidence="1">
    <location>
        <begin position="12"/>
        <end position="32"/>
    </location>
</feature>
<feature type="transmembrane region" description="Helical" evidence="1">
    <location>
        <begin position="45"/>
        <end position="65"/>
    </location>
</feature>
<feature type="transmembrane region" description="Helical" evidence="1">
    <location>
        <begin position="77"/>
        <end position="97"/>
    </location>
</feature>
<feature type="transmembrane region" description="Helical" evidence="1">
    <location>
        <begin position="112"/>
        <end position="132"/>
    </location>
</feature>
<feature type="transmembrane region" description="Helical" evidence="1">
    <location>
        <begin position="150"/>
        <end position="170"/>
    </location>
</feature>
<sequence length="186" mass="20319">MRDQKALSVRTVVAIGIGTAILFILKRFAVIPTGIANTNIDISYGFLGFIATLFGPIAGFFIGFLGHALNDFTQYGTPWWTWVFTTGLVGMVIGLFWRRFNVEAGNFGMKKIVSFNLLQIITNVVSWSLIAPTLDIWIYSEPANKVYVQGIVSAISNSIATGVIGTILLVTYAATRTRSGSLKKES</sequence>
<protein>
    <recommendedName>
        <fullName evidence="1">UPF0397 protein LCABL_04350</fullName>
    </recommendedName>
</protein>
<organism>
    <name type="scientific">Lacticaseibacillus casei (strain BL23)</name>
    <name type="common">Lactobacillus casei</name>
    <dbReference type="NCBI Taxonomy" id="543734"/>
    <lineage>
        <taxon>Bacteria</taxon>
        <taxon>Bacillati</taxon>
        <taxon>Bacillota</taxon>
        <taxon>Bacilli</taxon>
        <taxon>Lactobacillales</taxon>
        <taxon>Lactobacillaceae</taxon>
        <taxon>Lacticaseibacillus</taxon>
    </lineage>
</organism>
<comment type="subcellular location">
    <subcellularLocation>
        <location evidence="1">Cell membrane</location>
        <topology evidence="1">Multi-pass membrane protein</topology>
    </subcellularLocation>
</comment>
<comment type="similarity">
    <text evidence="1">Belongs to the UPF0397 family.</text>
</comment>
<gene>
    <name type="ordered locus">LCABL_04350</name>
</gene>
<dbReference type="EMBL" id="FM177140">
    <property type="protein sequence ID" value="CAQ65561.1"/>
    <property type="molecule type" value="Genomic_DNA"/>
</dbReference>
<dbReference type="KEGG" id="lcb:LCABL_04350"/>
<dbReference type="HOGENOM" id="CLU_120023_0_0_9"/>
<dbReference type="GO" id="GO:0005886">
    <property type="term" value="C:plasma membrane"/>
    <property type="evidence" value="ECO:0007669"/>
    <property type="project" value="UniProtKB-SubCell"/>
</dbReference>
<dbReference type="Gene3D" id="1.10.1760.20">
    <property type="match status" value="1"/>
</dbReference>
<dbReference type="HAMAP" id="MF_01572">
    <property type="entry name" value="UPF0397"/>
    <property type="match status" value="1"/>
</dbReference>
<dbReference type="InterPro" id="IPR009825">
    <property type="entry name" value="ECF_substrate-spec-like"/>
</dbReference>
<dbReference type="InterPro" id="IPR022914">
    <property type="entry name" value="UPF0397"/>
</dbReference>
<dbReference type="NCBIfam" id="NF010182">
    <property type="entry name" value="PRK13661.1"/>
    <property type="match status" value="1"/>
</dbReference>
<dbReference type="PANTHER" id="PTHR37815">
    <property type="entry name" value="UPF0397 PROTEIN BC_2624-RELATED"/>
    <property type="match status" value="1"/>
</dbReference>
<dbReference type="PANTHER" id="PTHR37815:SF3">
    <property type="entry name" value="UPF0397 PROTEIN SPR0429"/>
    <property type="match status" value="1"/>
</dbReference>
<dbReference type="Pfam" id="PF07155">
    <property type="entry name" value="ECF-ribofla_trS"/>
    <property type="match status" value="1"/>
</dbReference>
<name>Y435_LACCB</name>
<keyword id="KW-1003">Cell membrane</keyword>
<keyword id="KW-0472">Membrane</keyword>
<keyword id="KW-0812">Transmembrane</keyword>
<keyword id="KW-1133">Transmembrane helix</keyword>
<reference key="1">
    <citation type="submission" date="2008-06" db="EMBL/GenBank/DDBJ databases">
        <title>Lactobacillus casei BL23 complete genome sequence.</title>
        <authorList>
            <person name="Maze A."/>
            <person name="Boel G."/>
            <person name="Bourand A."/>
            <person name="Loux V."/>
            <person name="Gibrat J.F."/>
            <person name="Zuniga M."/>
            <person name="Hartke A."/>
            <person name="Deutscher J."/>
        </authorList>
    </citation>
    <scope>NUCLEOTIDE SEQUENCE [LARGE SCALE GENOMIC DNA]</scope>
    <source>
        <strain>BL23</strain>
    </source>
</reference>
<accession>B3W705</accession>
<proteinExistence type="inferred from homology"/>
<evidence type="ECO:0000255" key="1">
    <source>
        <dbReference type="HAMAP-Rule" id="MF_01572"/>
    </source>
</evidence>